<gene>
    <name type="ordered locus">BcerKBAB4_4748</name>
</gene>
<evidence type="ECO:0000255" key="1">
    <source>
        <dbReference type="HAMAP-Rule" id="MF_01685"/>
    </source>
</evidence>
<keyword id="KW-0274">FAD</keyword>
<keyword id="KW-0285">Flavoprotein</keyword>
<keyword id="KW-0521">NADP</keyword>
<keyword id="KW-0560">Oxidoreductase</keyword>
<reference key="1">
    <citation type="journal article" date="2008" name="Chem. Biol. Interact.">
        <title>Extending the Bacillus cereus group genomics to putative food-borne pathogens of different toxicity.</title>
        <authorList>
            <person name="Lapidus A."/>
            <person name="Goltsman E."/>
            <person name="Auger S."/>
            <person name="Galleron N."/>
            <person name="Segurens B."/>
            <person name="Dossat C."/>
            <person name="Land M.L."/>
            <person name="Broussolle V."/>
            <person name="Brillard J."/>
            <person name="Guinebretiere M.-H."/>
            <person name="Sanchis V."/>
            <person name="Nguen-the C."/>
            <person name="Lereclus D."/>
            <person name="Richardson P."/>
            <person name="Wincker P."/>
            <person name="Weissenbach J."/>
            <person name="Ehrlich S.D."/>
            <person name="Sorokin A."/>
        </authorList>
    </citation>
    <scope>NUCLEOTIDE SEQUENCE [LARGE SCALE GENOMIC DNA]</scope>
    <source>
        <strain>KBAB4</strain>
    </source>
</reference>
<organism>
    <name type="scientific">Bacillus mycoides (strain KBAB4)</name>
    <name type="common">Bacillus weihenstephanensis</name>
    <dbReference type="NCBI Taxonomy" id="315730"/>
    <lineage>
        <taxon>Bacteria</taxon>
        <taxon>Bacillati</taxon>
        <taxon>Bacillota</taxon>
        <taxon>Bacilli</taxon>
        <taxon>Bacillales</taxon>
        <taxon>Bacillaceae</taxon>
        <taxon>Bacillus</taxon>
        <taxon>Bacillus cereus group</taxon>
    </lineage>
</organism>
<protein>
    <recommendedName>
        <fullName evidence="1">Ferredoxin--NADP reductase 2</fullName>
        <shortName evidence="1">FNR 2</shortName>
        <shortName evidence="1">Fd-NADP(+) reductase 2</shortName>
        <ecNumber evidence="1">1.18.1.2</ecNumber>
    </recommendedName>
</protein>
<accession>A9VMZ3</accession>
<comment type="catalytic activity">
    <reaction evidence="1">
        <text>2 reduced [2Fe-2S]-[ferredoxin] + NADP(+) + H(+) = 2 oxidized [2Fe-2S]-[ferredoxin] + NADPH</text>
        <dbReference type="Rhea" id="RHEA:20125"/>
        <dbReference type="Rhea" id="RHEA-COMP:10000"/>
        <dbReference type="Rhea" id="RHEA-COMP:10001"/>
        <dbReference type="ChEBI" id="CHEBI:15378"/>
        <dbReference type="ChEBI" id="CHEBI:33737"/>
        <dbReference type="ChEBI" id="CHEBI:33738"/>
        <dbReference type="ChEBI" id="CHEBI:57783"/>
        <dbReference type="ChEBI" id="CHEBI:58349"/>
        <dbReference type="EC" id="1.18.1.2"/>
    </reaction>
</comment>
<comment type="cofactor">
    <cofactor evidence="1">
        <name>FAD</name>
        <dbReference type="ChEBI" id="CHEBI:57692"/>
    </cofactor>
    <text evidence="1">Binds 1 FAD per subunit.</text>
</comment>
<comment type="subunit">
    <text evidence="1">Homodimer.</text>
</comment>
<comment type="similarity">
    <text evidence="1">Belongs to the ferredoxin--NADP reductase type 2 family.</text>
</comment>
<proteinExistence type="inferred from homology"/>
<feature type="chain" id="PRO_0000364807" description="Ferredoxin--NADP reductase 2">
    <location>
        <begin position="1"/>
        <end position="329"/>
    </location>
</feature>
<feature type="binding site" evidence="1">
    <location>
        <position position="18"/>
    </location>
    <ligand>
        <name>FAD</name>
        <dbReference type="ChEBI" id="CHEBI:57692"/>
    </ligand>
</feature>
<feature type="binding site" evidence="1">
    <location>
        <position position="37"/>
    </location>
    <ligand>
        <name>FAD</name>
        <dbReference type="ChEBI" id="CHEBI:57692"/>
    </ligand>
</feature>
<feature type="binding site" evidence="1">
    <location>
        <position position="45"/>
    </location>
    <ligand>
        <name>FAD</name>
        <dbReference type="ChEBI" id="CHEBI:57692"/>
    </ligand>
</feature>
<feature type="binding site" evidence="1">
    <location>
        <position position="50"/>
    </location>
    <ligand>
        <name>FAD</name>
        <dbReference type="ChEBI" id="CHEBI:57692"/>
    </ligand>
</feature>
<feature type="binding site" evidence="1">
    <location>
        <position position="90"/>
    </location>
    <ligand>
        <name>FAD</name>
        <dbReference type="ChEBI" id="CHEBI:57692"/>
    </ligand>
</feature>
<feature type="binding site" evidence="1">
    <location>
        <position position="124"/>
    </location>
    <ligand>
        <name>FAD</name>
        <dbReference type="ChEBI" id="CHEBI:57692"/>
    </ligand>
</feature>
<feature type="binding site" evidence="1">
    <location>
        <position position="285"/>
    </location>
    <ligand>
        <name>FAD</name>
        <dbReference type="ChEBI" id="CHEBI:57692"/>
    </ligand>
</feature>
<feature type="binding site" evidence="1">
    <location>
        <position position="326"/>
    </location>
    <ligand>
        <name>FAD</name>
        <dbReference type="ChEBI" id="CHEBI:57692"/>
    </ligand>
</feature>
<sequence>MTENQKVYDITIIGGGPTGLFTAFYGGMRQASVKIIESLPQLGGQLSALYPEKYIYDVAGFPKVRAQELVDNLKEQMKKFDPTVCLEEAVDTLEKQADGIFKLVTNKQTHYSKSVIITAGNGAFQPRRLELEGTAKYEKKNLHYFVDDMNKFAGRRVVVFGGGDSAVDWTMMLEPIADKVTIAHRRDKFRAHEHSVESLMNSRAEVSTPYVPVELIGDDTIEQVVLQHVKTEEKIIIDVDDVIVNYGFVSSLGPIKNWGLDIQKNSILVNSKMETNIPGIYAAGDICTYEGKVKLIACGFGEAPTAVNNAKAYFDPNAKLQPMHSSSMF</sequence>
<dbReference type="EC" id="1.18.1.2" evidence="1"/>
<dbReference type="EMBL" id="CP000903">
    <property type="protein sequence ID" value="ABY45898.1"/>
    <property type="molecule type" value="Genomic_DNA"/>
</dbReference>
<dbReference type="RefSeq" id="WP_012261913.1">
    <property type="nucleotide sequence ID" value="NC_010184.1"/>
</dbReference>
<dbReference type="SMR" id="A9VMZ3"/>
<dbReference type="KEGG" id="bwe:BcerKBAB4_4748"/>
<dbReference type="eggNOG" id="COG0492">
    <property type="taxonomic scope" value="Bacteria"/>
</dbReference>
<dbReference type="HOGENOM" id="CLU_031864_5_5_9"/>
<dbReference type="Proteomes" id="UP000002154">
    <property type="component" value="Chromosome"/>
</dbReference>
<dbReference type="GO" id="GO:0004324">
    <property type="term" value="F:ferredoxin-NADP+ reductase activity"/>
    <property type="evidence" value="ECO:0007669"/>
    <property type="project" value="UniProtKB-UniRule"/>
</dbReference>
<dbReference type="GO" id="GO:0050660">
    <property type="term" value="F:flavin adenine dinucleotide binding"/>
    <property type="evidence" value="ECO:0007669"/>
    <property type="project" value="UniProtKB-UniRule"/>
</dbReference>
<dbReference type="GO" id="GO:0050661">
    <property type="term" value="F:NADP binding"/>
    <property type="evidence" value="ECO:0007669"/>
    <property type="project" value="UniProtKB-UniRule"/>
</dbReference>
<dbReference type="Gene3D" id="3.50.50.60">
    <property type="entry name" value="FAD/NAD(P)-binding domain"/>
    <property type="match status" value="2"/>
</dbReference>
<dbReference type="HAMAP" id="MF_01685">
    <property type="entry name" value="FENR2"/>
    <property type="match status" value="1"/>
</dbReference>
<dbReference type="InterPro" id="IPR036188">
    <property type="entry name" value="FAD/NAD-bd_sf"/>
</dbReference>
<dbReference type="InterPro" id="IPR023753">
    <property type="entry name" value="FAD/NAD-binding_dom"/>
</dbReference>
<dbReference type="InterPro" id="IPR022890">
    <property type="entry name" value="Fd--NADP_Rdtase_type_2"/>
</dbReference>
<dbReference type="InterPro" id="IPR050097">
    <property type="entry name" value="Ferredoxin-NADP_redctase_2"/>
</dbReference>
<dbReference type="PANTHER" id="PTHR48105">
    <property type="entry name" value="THIOREDOXIN REDUCTASE 1-RELATED-RELATED"/>
    <property type="match status" value="1"/>
</dbReference>
<dbReference type="Pfam" id="PF07992">
    <property type="entry name" value="Pyr_redox_2"/>
    <property type="match status" value="1"/>
</dbReference>
<dbReference type="PRINTS" id="PR00368">
    <property type="entry name" value="FADPNR"/>
</dbReference>
<dbReference type="PRINTS" id="PR00469">
    <property type="entry name" value="PNDRDTASEII"/>
</dbReference>
<dbReference type="SUPFAM" id="SSF51905">
    <property type="entry name" value="FAD/NAD(P)-binding domain"/>
    <property type="match status" value="1"/>
</dbReference>
<name>FENR2_BACMK</name>